<proteinExistence type="evidence at protein level"/>
<keyword id="KW-0002">3D-structure</keyword>
<keyword id="KW-0004">4Fe-4S</keyword>
<keyword id="KW-0408">Iron</keyword>
<keyword id="KW-0411">Iron-sulfur</keyword>
<keyword id="KW-0414">Isoprene biosynthesis</keyword>
<keyword id="KW-0479">Metal-binding</keyword>
<keyword id="KW-0560">Oxidoreductase</keyword>
<comment type="function">
    <text evidence="1">Converts 2C-methyl-D-erythritol 2,4-cyclodiphosphate (ME-2,4cPP) into 1-hydroxy-2-methyl-2-(E)-butenyl 4-diphosphate.</text>
</comment>
<comment type="catalytic activity">
    <reaction evidence="1">
        <text>(2E)-4-hydroxy-3-methylbut-2-enyl diphosphate + oxidized [flavodoxin] + H2O + 2 H(+) = 2-C-methyl-D-erythritol 2,4-cyclic diphosphate + reduced [flavodoxin]</text>
        <dbReference type="Rhea" id="RHEA:43604"/>
        <dbReference type="Rhea" id="RHEA-COMP:10622"/>
        <dbReference type="Rhea" id="RHEA-COMP:10623"/>
        <dbReference type="ChEBI" id="CHEBI:15377"/>
        <dbReference type="ChEBI" id="CHEBI:15378"/>
        <dbReference type="ChEBI" id="CHEBI:57618"/>
        <dbReference type="ChEBI" id="CHEBI:58210"/>
        <dbReference type="ChEBI" id="CHEBI:58483"/>
        <dbReference type="ChEBI" id="CHEBI:128753"/>
        <dbReference type="EC" id="1.17.7.3"/>
    </reaction>
</comment>
<comment type="cofactor">
    <cofactor evidence="1 2">
        <name>[4Fe-4S] cluster</name>
        <dbReference type="ChEBI" id="CHEBI:49883"/>
    </cofactor>
    <text evidence="1 2">Binds 1 [4Fe-4S] cluster per subunit.</text>
</comment>
<comment type="pathway">
    <text evidence="1">Isoprenoid biosynthesis; isopentenyl diphosphate biosynthesis via DXP pathway; isopentenyl diphosphate from 1-deoxy-D-xylulose 5-phosphate: step 5/6.</text>
</comment>
<comment type="subunit">
    <text evidence="2">Homodimer.</text>
</comment>
<comment type="similarity">
    <text evidence="1">Belongs to the IspG family.</text>
</comment>
<reference key="1">
    <citation type="journal article" date="2004" name="Nat. Biotechnol.">
        <title>The genome sequence of the extreme thermophile Thermus thermophilus.</title>
        <authorList>
            <person name="Henne A."/>
            <person name="Brueggemann H."/>
            <person name="Raasch C."/>
            <person name="Wiezer A."/>
            <person name="Hartsch T."/>
            <person name="Liesegang H."/>
            <person name="Johann A."/>
            <person name="Lienard T."/>
            <person name="Gohl O."/>
            <person name="Martinez-Arias R."/>
            <person name="Jacobi C."/>
            <person name="Starkuviene V."/>
            <person name="Schlenczeck S."/>
            <person name="Dencker S."/>
            <person name="Huber R."/>
            <person name="Klenk H.-P."/>
            <person name="Kramer W."/>
            <person name="Merkl R."/>
            <person name="Gottschalk G."/>
            <person name="Fritz H.-J."/>
        </authorList>
    </citation>
    <scope>NUCLEOTIDE SEQUENCE [LARGE SCALE GENOMIC DNA]</scope>
    <source>
        <strain>ATCC BAA-163 / DSM 7039 / HB27</strain>
    </source>
</reference>
<reference key="2">
    <citation type="journal article" date="2011" name="FEBS Lett.">
        <title>Structure of the E-1-hydroxy-2-methyl-but-2-enyl-4-diphosphate synthase (GcpE) from Thermus thermophilus.</title>
        <authorList>
            <person name="Rekittke I."/>
            <person name="Nonaka T."/>
            <person name="Wiesner J."/>
            <person name="Demmer U."/>
            <person name="Warkentin E."/>
            <person name="Jomaa H."/>
            <person name="Ermler U."/>
        </authorList>
    </citation>
    <scope>X-RAY CRYSTALLOGRAPHY (2.50 ANGSTROMS) IN COMPLEX WITH IRON-SULFUR (4FE-4S)</scope>
    <scope>COFACTOR</scope>
    <scope>SUBUNIT</scope>
</reference>
<dbReference type="EC" id="1.17.7.3" evidence="1"/>
<dbReference type="EMBL" id="AE017221">
    <property type="protein sequence ID" value="AAS82019.1"/>
    <property type="molecule type" value="Genomic_DNA"/>
</dbReference>
<dbReference type="RefSeq" id="WP_011174043.1">
    <property type="nucleotide sequence ID" value="NC_005835.1"/>
</dbReference>
<dbReference type="PDB" id="2Y0F">
    <property type="method" value="X-ray"/>
    <property type="resolution" value="2.50 A"/>
    <property type="chains" value="A/B/C/D=1-406"/>
</dbReference>
<dbReference type="PDB" id="4G9P">
    <property type="method" value="X-ray"/>
    <property type="resolution" value="1.55 A"/>
    <property type="chains" value="A=1-406"/>
</dbReference>
<dbReference type="PDBsum" id="2Y0F"/>
<dbReference type="PDBsum" id="4G9P"/>
<dbReference type="SMR" id="Q72H18"/>
<dbReference type="KEGG" id="tth:TT_C1677"/>
<dbReference type="eggNOG" id="COG0821">
    <property type="taxonomic scope" value="Bacteria"/>
</dbReference>
<dbReference type="HOGENOM" id="CLU_042258_1_0_0"/>
<dbReference type="OrthoDB" id="9803214at2"/>
<dbReference type="BRENDA" id="1.17.7.3">
    <property type="organism ID" value="2305"/>
</dbReference>
<dbReference type="UniPathway" id="UPA00056">
    <property type="reaction ID" value="UER00096"/>
</dbReference>
<dbReference type="EvolutionaryTrace" id="Q72H18"/>
<dbReference type="Proteomes" id="UP000000592">
    <property type="component" value="Chromosome"/>
</dbReference>
<dbReference type="GO" id="GO:0051539">
    <property type="term" value="F:4 iron, 4 sulfur cluster binding"/>
    <property type="evidence" value="ECO:0007669"/>
    <property type="project" value="UniProtKB-UniRule"/>
</dbReference>
<dbReference type="GO" id="GO:0046429">
    <property type="term" value="F:4-hydroxy-3-methylbut-2-en-1-yl diphosphate synthase activity (ferredoxin)"/>
    <property type="evidence" value="ECO:0007669"/>
    <property type="project" value="UniProtKB-UniRule"/>
</dbReference>
<dbReference type="GO" id="GO:0141197">
    <property type="term" value="F:4-hydroxy-3-methylbut-2-enyl-diphosphate synthase activity (flavodoxin)"/>
    <property type="evidence" value="ECO:0007669"/>
    <property type="project" value="UniProtKB-EC"/>
</dbReference>
<dbReference type="GO" id="GO:0005506">
    <property type="term" value="F:iron ion binding"/>
    <property type="evidence" value="ECO:0007669"/>
    <property type="project" value="InterPro"/>
</dbReference>
<dbReference type="GO" id="GO:0019288">
    <property type="term" value="P:isopentenyl diphosphate biosynthetic process, methylerythritol 4-phosphate pathway"/>
    <property type="evidence" value="ECO:0007669"/>
    <property type="project" value="UniProtKB-UniRule"/>
</dbReference>
<dbReference type="GO" id="GO:0016114">
    <property type="term" value="P:terpenoid biosynthetic process"/>
    <property type="evidence" value="ECO:0007669"/>
    <property type="project" value="InterPro"/>
</dbReference>
<dbReference type="FunFam" id="3.30.413.10:FF:000012">
    <property type="entry name" value="4-hydroxy-3-methylbut-2-en-1-yl diphosphate synthase (flavodoxin)"/>
    <property type="match status" value="1"/>
</dbReference>
<dbReference type="Gene3D" id="3.20.20.20">
    <property type="entry name" value="Dihydropteroate synthase-like"/>
    <property type="match status" value="1"/>
</dbReference>
<dbReference type="Gene3D" id="3.30.413.10">
    <property type="entry name" value="Sulfite Reductase Hemoprotein, domain 1"/>
    <property type="match status" value="1"/>
</dbReference>
<dbReference type="HAMAP" id="MF_00159">
    <property type="entry name" value="IspG"/>
    <property type="match status" value="1"/>
</dbReference>
<dbReference type="InterPro" id="IPR011005">
    <property type="entry name" value="Dihydropteroate_synth-like_sf"/>
</dbReference>
<dbReference type="InterPro" id="IPR016425">
    <property type="entry name" value="IspG_bac"/>
</dbReference>
<dbReference type="InterPro" id="IPR004588">
    <property type="entry name" value="IspG_bac-typ"/>
</dbReference>
<dbReference type="InterPro" id="IPR045854">
    <property type="entry name" value="NO2/SO3_Rdtase_4Fe4S_sf"/>
</dbReference>
<dbReference type="NCBIfam" id="TIGR00612">
    <property type="entry name" value="ispG_gcpE"/>
    <property type="match status" value="1"/>
</dbReference>
<dbReference type="NCBIfam" id="NF001540">
    <property type="entry name" value="PRK00366.1"/>
    <property type="match status" value="1"/>
</dbReference>
<dbReference type="PANTHER" id="PTHR30454">
    <property type="entry name" value="4-HYDROXY-3-METHYLBUT-2-EN-1-YL DIPHOSPHATE SYNTHASE"/>
    <property type="match status" value="1"/>
</dbReference>
<dbReference type="PANTHER" id="PTHR30454:SF0">
    <property type="entry name" value="4-HYDROXY-3-METHYLBUT-2-EN-1-YL DIPHOSPHATE SYNTHASE (FERREDOXIN), CHLOROPLASTIC"/>
    <property type="match status" value="1"/>
</dbReference>
<dbReference type="Pfam" id="PF04551">
    <property type="entry name" value="GcpE"/>
    <property type="match status" value="1"/>
</dbReference>
<dbReference type="PIRSF" id="PIRSF004640">
    <property type="entry name" value="IspG"/>
    <property type="match status" value="1"/>
</dbReference>
<dbReference type="SUPFAM" id="SSF51717">
    <property type="entry name" value="Dihydropteroate synthetase-like"/>
    <property type="match status" value="1"/>
</dbReference>
<dbReference type="SUPFAM" id="SSF56014">
    <property type="entry name" value="Nitrite and sulphite reductase 4Fe-4S domain-like"/>
    <property type="match status" value="1"/>
</dbReference>
<gene>
    <name evidence="1" type="primary">ispG</name>
    <name type="synonym">gcpE</name>
    <name type="ordered locus">TT_C1677</name>
</gene>
<evidence type="ECO:0000255" key="1">
    <source>
        <dbReference type="HAMAP-Rule" id="MF_00159"/>
    </source>
</evidence>
<evidence type="ECO:0000269" key="2">
    <source>
    </source>
</evidence>
<evidence type="ECO:0007829" key="3">
    <source>
        <dbReference type="PDB" id="2Y0F"/>
    </source>
</evidence>
<evidence type="ECO:0007829" key="4">
    <source>
        <dbReference type="PDB" id="4G9P"/>
    </source>
</evidence>
<organism>
    <name type="scientific">Thermus thermophilus (strain ATCC BAA-163 / DSM 7039 / HB27)</name>
    <dbReference type="NCBI Taxonomy" id="262724"/>
    <lineage>
        <taxon>Bacteria</taxon>
        <taxon>Thermotogati</taxon>
        <taxon>Deinococcota</taxon>
        <taxon>Deinococci</taxon>
        <taxon>Thermales</taxon>
        <taxon>Thermaceae</taxon>
        <taxon>Thermus</taxon>
    </lineage>
</organism>
<name>ISPG_THET2</name>
<feature type="chain" id="PRO_0000190644" description="4-hydroxy-3-methylbut-2-en-1-yl diphosphate synthase (flavodoxin)">
    <location>
        <begin position="1"/>
        <end position="406"/>
    </location>
</feature>
<feature type="binding site" evidence="1 2">
    <location>
        <position position="297"/>
    </location>
    <ligand>
        <name>[4Fe-4S] cluster</name>
        <dbReference type="ChEBI" id="CHEBI:49883"/>
    </ligand>
</feature>
<feature type="binding site" evidence="1 2">
    <location>
        <position position="300"/>
    </location>
    <ligand>
        <name>[4Fe-4S] cluster</name>
        <dbReference type="ChEBI" id="CHEBI:49883"/>
    </ligand>
</feature>
<feature type="binding site" evidence="1 2">
    <location>
        <position position="343"/>
    </location>
    <ligand>
        <name>[4Fe-4S] cluster</name>
        <dbReference type="ChEBI" id="CHEBI:49883"/>
    </ligand>
</feature>
<feature type="binding site" evidence="1 2">
    <location>
        <position position="350"/>
    </location>
    <ligand>
        <name>[4Fe-4S] cluster</name>
        <dbReference type="ChEBI" id="CHEBI:49883"/>
    </ligand>
</feature>
<feature type="strand" evidence="4">
    <location>
        <begin position="11"/>
        <end position="13"/>
    </location>
</feature>
<feature type="strand" evidence="4">
    <location>
        <begin position="16"/>
        <end position="19"/>
    </location>
</feature>
<feature type="strand" evidence="4">
    <location>
        <begin position="25"/>
        <end position="29"/>
    </location>
</feature>
<feature type="helix" evidence="4">
    <location>
        <begin position="37"/>
        <end position="50"/>
    </location>
</feature>
<feature type="strand" evidence="4">
    <location>
        <begin position="53"/>
        <end position="58"/>
    </location>
</feature>
<feature type="helix" evidence="4">
    <location>
        <begin position="62"/>
        <end position="77"/>
    </location>
</feature>
<feature type="strand" evidence="4">
    <location>
        <begin position="84"/>
        <end position="87"/>
    </location>
</feature>
<feature type="helix" evidence="4">
    <location>
        <begin position="92"/>
        <end position="98"/>
    </location>
</feature>
<feature type="helix" evidence="4">
    <location>
        <begin position="100"/>
        <end position="105"/>
    </location>
</feature>
<feature type="strand" evidence="4">
    <location>
        <begin position="107"/>
        <end position="111"/>
    </location>
</feature>
<feature type="helix" evidence="4">
    <location>
        <begin position="120"/>
        <end position="136"/>
    </location>
</feature>
<feature type="strand" evidence="4">
    <location>
        <begin position="140"/>
        <end position="145"/>
    </location>
</feature>
<feature type="helix" evidence="4">
    <location>
        <begin position="146"/>
        <end position="148"/>
    </location>
</feature>
<feature type="helix" evidence="4">
    <location>
        <begin position="151"/>
        <end position="163"/>
    </location>
</feature>
<feature type="strand" evidence="4">
    <location>
        <begin position="164"/>
        <end position="166"/>
    </location>
</feature>
<feature type="helix" evidence="4">
    <location>
        <begin position="170"/>
        <end position="192"/>
    </location>
</feature>
<feature type="helix" evidence="4">
    <location>
        <begin position="196"/>
        <end position="198"/>
    </location>
</feature>
<feature type="strand" evidence="4">
    <location>
        <begin position="199"/>
        <end position="204"/>
    </location>
</feature>
<feature type="helix" evidence="4">
    <location>
        <begin position="208"/>
        <end position="221"/>
    </location>
</feature>
<feature type="strand" evidence="4">
    <location>
        <begin position="226"/>
        <end position="228"/>
    </location>
</feature>
<feature type="helix" evidence="4">
    <location>
        <begin position="236"/>
        <end position="252"/>
    </location>
</feature>
<feature type="strand" evidence="4">
    <location>
        <begin position="257"/>
        <end position="259"/>
    </location>
</feature>
<feature type="strand" evidence="3">
    <location>
        <begin position="267"/>
        <end position="269"/>
    </location>
</feature>
<feature type="helix" evidence="4">
    <location>
        <begin position="273"/>
        <end position="284"/>
    </location>
</feature>
<feature type="strand" evidence="4">
    <location>
        <begin position="293"/>
        <end position="296"/>
    </location>
</feature>
<feature type="helix" evidence="4">
    <location>
        <begin position="305"/>
        <end position="329"/>
    </location>
</feature>
<feature type="helix" evidence="4">
    <location>
        <begin position="333"/>
        <end position="335"/>
    </location>
</feature>
<feature type="strand" evidence="4">
    <location>
        <begin position="337"/>
        <end position="343"/>
    </location>
</feature>
<feature type="turn" evidence="4">
    <location>
        <begin position="344"/>
        <end position="346"/>
    </location>
</feature>
<feature type="helix" evidence="4">
    <location>
        <begin position="347"/>
        <end position="353"/>
    </location>
</feature>
<feature type="strand" evidence="4">
    <location>
        <begin position="354"/>
        <end position="359"/>
    </location>
</feature>
<feature type="strand" evidence="4">
    <location>
        <begin position="367"/>
        <end position="373"/>
    </location>
</feature>
<feature type="strand" evidence="4">
    <location>
        <begin position="376"/>
        <end position="384"/>
    </location>
</feature>
<feature type="helix" evidence="4">
    <location>
        <begin position="386"/>
        <end position="401"/>
    </location>
</feature>
<accession>Q72H18</accession>
<protein>
    <recommendedName>
        <fullName evidence="1">4-hydroxy-3-methylbut-2-en-1-yl diphosphate synthase (flavodoxin)</fullName>
        <ecNumber evidence="1">1.17.7.3</ecNumber>
    </recommendedName>
    <alternativeName>
        <fullName evidence="1">1-hydroxy-2-methyl-2-(E)-butenyl 4-diphosphate synthase</fullName>
    </alternativeName>
</protein>
<sequence length="406" mass="44217">MEGMRRPTPTVYVGRVPIGGAHPIAVQSMTNTPTRDVEATTAQVLELHRAGSEIVRLTVNDEEAAKAVPEIKRRLLAEGVEVPLVGDFHFNGHLLLRKYPKMAEALDKFRINPGTLGRGRHKDEHFAEMIRIAMDLGKPVRIGANWGSLDPALLTELMDRNASRPEPKSAHEVVLEALVESAVRAYEAALEMGLGEDKLVLSAKVSKARDLVWVYRELARRTQAPLHLGLTEAGMGVKGIVASAAALAPLLLEGIGDTIRVSLTPSPKEPRTKEVEVAQEILQALGLRAFAPEVTSCPGCGRTTSTFFQELAEEVSRRLKERLPEWRARYPGVEELKVAVMGCVVNGPGESKHAHIGISLPGAGEEPKAPVYADGKLLTILKGEGIAEEFLRLVEDYVKTRFAPKA</sequence>